<feature type="chain" id="PRO_0000214681" description="Probable 2-(5''-triphosphoribosyl)-3'-dephosphocoenzyme-A synthase">
    <location>
        <begin position="1"/>
        <end position="313"/>
    </location>
</feature>
<proteinExistence type="inferred from homology"/>
<comment type="catalytic activity">
    <reaction>
        <text>3'-dephospho-CoA + ATP = 2'-(5''-triphospho-alpha-D-ribosyl)-3'-dephospho-CoA + adenine</text>
        <dbReference type="Rhea" id="RHEA:15117"/>
        <dbReference type="ChEBI" id="CHEBI:16708"/>
        <dbReference type="ChEBI" id="CHEBI:30616"/>
        <dbReference type="ChEBI" id="CHEBI:57328"/>
        <dbReference type="ChEBI" id="CHEBI:61378"/>
        <dbReference type="EC" id="2.4.2.52"/>
    </reaction>
</comment>
<comment type="similarity">
    <text evidence="1">Belongs to the CitG/MdcB family.</text>
</comment>
<organism>
    <name type="scientific">Vibrio cholerae serotype O1 (strain ATCC 39315 / El Tor Inaba N16961)</name>
    <dbReference type="NCBI Taxonomy" id="243277"/>
    <lineage>
        <taxon>Bacteria</taxon>
        <taxon>Pseudomonadati</taxon>
        <taxon>Pseudomonadota</taxon>
        <taxon>Gammaproteobacteria</taxon>
        <taxon>Vibrionales</taxon>
        <taxon>Vibrionaceae</taxon>
        <taxon>Vibrio</taxon>
    </lineage>
</organism>
<gene>
    <name type="primary">citG</name>
    <name type="ordered locus">VC_0801</name>
</gene>
<sequence>MTIPAALDLLLELPSQASSSSGSRTFSLPRLVGHLAYHAMMLEVHLTPKPGLVDTANNGAHRDMDLNTFIASAEAIAPYLHSFVSAGWESAGNPAAQLLSALRPIGIEAEQAMFAATQGVNTHKGMIFILGLICGSVGWLKANQLKIDAQHIGETIRQACQFLVIDELKAKRDCEPETAGERIYRQYGLTGARGEAASGLAMVMQHALPAYQACLTKGASTEQALWHTLLVLMANNNDSNLVSRGGLAGLHFVQEQAQQLLAKGGFLYQEIEQALTALDSVLIEKHLSPGGSADLLAATWLIYELVQLFKVRH</sequence>
<keyword id="KW-0067">ATP-binding</keyword>
<keyword id="KW-0547">Nucleotide-binding</keyword>
<keyword id="KW-1185">Reference proteome</keyword>
<keyword id="KW-0808">Transferase</keyword>
<accession>Q9KTT7</accession>
<protein>
    <recommendedName>
        <fullName>Probable 2-(5''-triphosphoribosyl)-3'-dephosphocoenzyme-A synthase</fullName>
        <shortName>2-(5''-triphosphoribosyl)-3'-dephospho-CoA synthase</shortName>
        <ecNumber>2.4.2.52</ecNumber>
    </recommendedName>
</protein>
<dbReference type="EC" id="2.4.2.52"/>
<dbReference type="EMBL" id="AE003852">
    <property type="protein sequence ID" value="AAF93965.1"/>
    <property type="molecule type" value="Genomic_DNA"/>
</dbReference>
<dbReference type="PIR" id="C82278">
    <property type="entry name" value="C82278"/>
</dbReference>
<dbReference type="RefSeq" id="NP_230450.1">
    <property type="nucleotide sequence ID" value="NC_002505.1"/>
</dbReference>
<dbReference type="RefSeq" id="WP_000154857.1">
    <property type="nucleotide sequence ID" value="NZ_LT906614.1"/>
</dbReference>
<dbReference type="STRING" id="243277.VC_0801"/>
<dbReference type="DNASU" id="2615344"/>
<dbReference type="EnsemblBacteria" id="AAF93965">
    <property type="protein sequence ID" value="AAF93965"/>
    <property type="gene ID" value="VC_0801"/>
</dbReference>
<dbReference type="KEGG" id="vch:VC_0801"/>
<dbReference type="PATRIC" id="fig|243277.26.peg.764"/>
<dbReference type="eggNOG" id="COG1767">
    <property type="taxonomic scope" value="Bacteria"/>
</dbReference>
<dbReference type="HOGENOM" id="CLU_056179_1_0_6"/>
<dbReference type="Proteomes" id="UP000000584">
    <property type="component" value="Chromosome 1"/>
</dbReference>
<dbReference type="GO" id="GO:0005524">
    <property type="term" value="F:ATP binding"/>
    <property type="evidence" value="ECO:0007669"/>
    <property type="project" value="UniProtKB-KW"/>
</dbReference>
<dbReference type="GO" id="GO:0046917">
    <property type="term" value="F:triphosphoribosyl-dephospho-CoA synthase activity"/>
    <property type="evidence" value="ECO:0000318"/>
    <property type="project" value="GO_Central"/>
</dbReference>
<dbReference type="GO" id="GO:0051191">
    <property type="term" value="P:prosthetic group biosynthetic process"/>
    <property type="evidence" value="ECO:0000318"/>
    <property type="project" value="GO_Central"/>
</dbReference>
<dbReference type="FunFam" id="1.10.4200.10:FF:000001">
    <property type="entry name" value="Triphosphoribosyl-dephospho-CoA synthase CitG"/>
    <property type="match status" value="1"/>
</dbReference>
<dbReference type="Gene3D" id="1.10.4200.10">
    <property type="entry name" value="Triphosphoribosyl-dephospho-CoA protein"/>
    <property type="match status" value="1"/>
</dbReference>
<dbReference type="HAMAP" id="MF_00397">
    <property type="entry name" value="CitG"/>
    <property type="match status" value="1"/>
</dbReference>
<dbReference type="InterPro" id="IPR002736">
    <property type="entry name" value="CitG"/>
</dbReference>
<dbReference type="InterPro" id="IPR017551">
    <property type="entry name" value="TriPribosyl-deP-CoA_syn_CitG"/>
</dbReference>
<dbReference type="NCBIfam" id="TIGR03125">
    <property type="entry name" value="citrate_citG"/>
    <property type="match status" value="1"/>
</dbReference>
<dbReference type="PANTHER" id="PTHR30201:SF2">
    <property type="entry name" value="2-(5''-TRIPHOSPHORIBOSYL)-3'-DEPHOSPHOCOENZYME-A SYNTHASE"/>
    <property type="match status" value="1"/>
</dbReference>
<dbReference type="PANTHER" id="PTHR30201">
    <property type="entry name" value="TRIPHOSPHORIBOSYL-DEPHOSPHO-COA SYNTHASE"/>
    <property type="match status" value="1"/>
</dbReference>
<dbReference type="Pfam" id="PF01874">
    <property type="entry name" value="CitG"/>
    <property type="match status" value="1"/>
</dbReference>
<reference key="1">
    <citation type="journal article" date="2000" name="Nature">
        <title>DNA sequence of both chromosomes of the cholera pathogen Vibrio cholerae.</title>
        <authorList>
            <person name="Heidelberg J.F."/>
            <person name="Eisen J.A."/>
            <person name="Nelson W.C."/>
            <person name="Clayton R.A."/>
            <person name="Gwinn M.L."/>
            <person name="Dodson R.J."/>
            <person name="Haft D.H."/>
            <person name="Hickey E.K."/>
            <person name="Peterson J.D."/>
            <person name="Umayam L.A."/>
            <person name="Gill S.R."/>
            <person name="Nelson K.E."/>
            <person name="Read T.D."/>
            <person name="Tettelin H."/>
            <person name="Richardson D.L."/>
            <person name="Ermolaeva M.D."/>
            <person name="Vamathevan J.J."/>
            <person name="Bass S."/>
            <person name="Qin H."/>
            <person name="Dragoi I."/>
            <person name="Sellers P."/>
            <person name="McDonald L.A."/>
            <person name="Utterback T.R."/>
            <person name="Fleischmann R.D."/>
            <person name="Nierman W.C."/>
            <person name="White O."/>
            <person name="Salzberg S.L."/>
            <person name="Smith H.O."/>
            <person name="Colwell R.R."/>
            <person name="Mekalanos J.J."/>
            <person name="Venter J.C."/>
            <person name="Fraser C.M."/>
        </authorList>
    </citation>
    <scope>NUCLEOTIDE SEQUENCE [LARGE SCALE GENOMIC DNA]</scope>
    <source>
        <strain>ATCC 39315 / El Tor Inaba N16961</strain>
    </source>
</reference>
<evidence type="ECO:0000305" key="1"/>
<name>CITG_VIBCH</name>